<accession>Q27287</accession>
<reference key="1">
    <citation type="journal article" date="1987" name="Mol. Cell. Biol.">
        <title>Metallothionein genes MTa and MTb expressed under distinct quantitative and tissue-specific regulation in sea urchin embryos.</title>
        <authorList>
            <person name="Wilkinson D.G."/>
            <person name="Nemer M."/>
        </authorList>
    </citation>
    <scope>NUCLEOTIDE SEQUENCE [MRNA]</scope>
</reference>
<reference key="2">
    <citation type="journal article" date="1991" name="J. Biol. Chem.">
        <title>Structure, spatial, and temporal expression of two sea urchin metallothionein genes, SpMTB1 and SpMTA.</title>
        <authorList>
            <person name="Nemer M."/>
            <person name="Thornton R.D."/>
            <person name="Stuebing E.W."/>
            <person name="Harlow P."/>
        </authorList>
    </citation>
    <scope>NUCLEOTIDE SEQUENCE [GENOMIC DNA]</scope>
</reference>
<evidence type="ECO:0000305" key="1"/>
<keyword id="KW-0479">Metal-binding</keyword>
<keyword id="KW-0480">Metal-thiolate cluster</keyword>
<keyword id="KW-1185">Reference proteome</keyword>
<name>MTB_STRPU</name>
<dbReference type="EMBL" id="M15989">
    <property type="protein sequence ID" value="AAA30063.1"/>
    <property type="molecule type" value="mRNA"/>
</dbReference>
<dbReference type="EMBL" id="M59822">
    <property type="protein sequence ID" value="AAA30062.1"/>
    <property type="molecule type" value="Genomic_DNA"/>
</dbReference>
<dbReference type="PIR" id="A38739">
    <property type="entry name" value="A38739"/>
</dbReference>
<dbReference type="RefSeq" id="NP_999741.1">
    <property type="nucleotide sequence ID" value="NM_214576.2"/>
</dbReference>
<dbReference type="SMR" id="Q27287"/>
<dbReference type="EnsemblMetazoa" id="XM_030974679">
    <property type="protein sequence ID" value="XP_030830539"/>
    <property type="gene ID" value="LOC115919944"/>
</dbReference>
<dbReference type="GeneID" id="373378"/>
<dbReference type="KEGG" id="spu:373378"/>
<dbReference type="CTD" id="373378"/>
<dbReference type="HOGENOM" id="CLU_2834403_0_0_1"/>
<dbReference type="InParanoid" id="Q27287"/>
<dbReference type="PhylomeDB" id="Q27287"/>
<dbReference type="Proteomes" id="UP000007110">
    <property type="component" value="Unassembled WGS sequence"/>
</dbReference>
<dbReference type="GO" id="GO:0046872">
    <property type="term" value="F:metal ion binding"/>
    <property type="evidence" value="ECO:0007669"/>
    <property type="project" value="UniProtKB-KW"/>
</dbReference>
<dbReference type="InterPro" id="IPR017980">
    <property type="entry name" value="Metalthion_4_echinoid/annelid"/>
</dbReference>
<dbReference type="InterPro" id="IPR001396">
    <property type="entry name" value="Metalthion_4_echinoidea"/>
</dbReference>
<dbReference type="InterPro" id="IPR017854">
    <property type="entry name" value="Metalthion_dom_sf"/>
</dbReference>
<dbReference type="Pfam" id="PF05522">
    <property type="entry name" value="Metallothio_6"/>
    <property type="match status" value="1"/>
</dbReference>
<dbReference type="PRINTS" id="PR00873">
    <property type="entry name" value="MTECHINOIDEA"/>
</dbReference>
<dbReference type="SUPFAM" id="SSF57868">
    <property type="entry name" value="Metallothionein"/>
    <property type="match status" value="2"/>
</dbReference>
<organism>
    <name type="scientific">Strongylocentrotus purpuratus</name>
    <name type="common">Purple sea urchin</name>
    <dbReference type="NCBI Taxonomy" id="7668"/>
    <lineage>
        <taxon>Eukaryota</taxon>
        <taxon>Metazoa</taxon>
        <taxon>Echinodermata</taxon>
        <taxon>Eleutherozoa</taxon>
        <taxon>Echinozoa</taxon>
        <taxon>Echinoidea</taxon>
        <taxon>Euechinoidea</taxon>
        <taxon>Echinacea</taxon>
        <taxon>Camarodonta</taxon>
        <taxon>Echinidea</taxon>
        <taxon>Strongylocentrotidae</taxon>
        <taxon>Strongylocentrotus</taxon>
    </lineage>
</organism>
<gene>
    <name type="primary">MTB1</name>
    <name type="synonym">MTB</name>
</gene>
<protein>
    <recommendedName>
        <fullName>Metallothionein-B</fullName>
        <shortName>MTB</shortName>
    </recommendedName>
</protein>
<sequence>MPDVKCVCCKEGNECACTGQDCCTIGKCCKDGTCCGKCSNAACKTCADGCTCGSGCSCTEGNCPC</sequence>
<feature type="chain" id="PRO_0000197348" description="Metallothionein-B">
    <location>
        <begin position="1"/>
        <end position="65"/>
    </location>
</feature>
<comment type="function">
    <text>Metallothioneins have a high content of cysteine residues that bind various heavy metals.</text>
</comment>
<comment type="induction">
    <text>By heavy metals.</text>
</comment>
<comment type="similarity">
    <text evidence="1">Belongs to the metallothionein superfamily. Type 4 family.</text>
</comment>
<proteinExistence type="evidence at transcript level"/>